<dbReference type="EMBL" id="CH408030">
    <property type="protein sequence ID" value="EAQ90908.1"/>
    <property type="molecule type" value="Genomic_DNA"/>
</dbReference>
<dbReference type="RefSeq" id="XP_001229359.1">
    <property type="nucleotide sequence ID" value="XM_001229358.1"/>
</dbReference>
<dbReference type="SMR" id="Q2HAB1"/>
<dbReference type="FunCoup" id="Q2HAB1">
    <property type="interactions" value="163"/>
</dbReference>
<dbReference type="STRING" id="306901.Q2HAB1"/>
<dbReference type="GlyCosmos" id="Q2HAB1">
    <property type="glycosylation" value="4 sites, No reported glycans"/>
</dbReference>
<dbReference type="GeneID" id="4389580"/>
<dbReference type="VEuPathDB" id="FungiDB:CHGG_02843"/>
<dbReference type="eggNOG" id="KOG3511">
    <property type="taxonomic scope" value="Eukaryota"/>
</dbReference>
<dbReference type="HOGENOM" id="CLU_000700_0_0_1"/>
<dbReference type="InParanoid" id="Q2HAB1"/>
<dbReference type="OMA" id="ATMSEFI"/>
<dbReference type="OrthoDB" id="443634at2759"/>
<dbReference type="Proteomes" id="UP000001056">
    <property type="component" value="Unassembled WGS sequence"/>
</dbReference>
<dbReference type="GO" id="GO:0005829">
    <property type="term" value="C:cytosol"/>
    <property type="evidence" value="ECO:0007669"/>
    <property type="project" value="GOC"/>
</dbReference>
<dbReference type="GO" id="GO:0005794">
    <property type="term" value="C:Golgi apparatus"/>
    <property type="evidence" value="ECO:0007669"/>
    <property type="project" value="UniProtKB-SubCell"/>
</dbReference>
<dbReference type="GO" id="GO:0016020">
    <property type="term" value="C:membrane"/>
    <property type="evidence" value="ECO:0007669"/>
    <property type="project" value="UniProtKB-KW"/>
</dbReference>
<dbReference type="GO" id="GO:0006895">
    <property type="term" value="P:Golgi to endosome transport"/>
    <property type="evidence" value="ECO:0007669"/>
    <property type="project" value="TreeGrafter"/>
</dbReference>
<dbReference type="GO" id="GO:0006896">
    <property type="term" value="P:Golgi to vacuole transport"/>
    <property type="evidence" value="ECO:0007669"/>
    <property type="project" value="TreeGrafter"/>
</dbReference>
<dbReference type="GO" id="GO:0006623">
    <property type="term" value="P:protein targeting to vacuole"/>
    <property type="evidence" value="ECO:0007669"/>
    <property type="project" value="TreeGrafter"/>
</dbReference>
<dbReference type="CDD" id="cd15482">
    <property type="entry name" value="Sialidase_non-viral"/>
    <property type="match status" value="3"/>
</dbReference>
<dbReference type="FunFam" id="3.30.60.270:FF:000005">
    <property type="entry name" value="Sortilin"/>
    <property type="match status" value="2"/>
</dbReference>
<dbReference type="Gene3D" id="2.10.70.80">
    <property type="match status" value="2"/>
</dbReference>
<dbReference type="Gene3D" id="2.120.10.10">
    <property type="match status" value="1"/>
</dbReference>
<dbReference type="Gene3D" id="3.30.60.270">
    <property type="match status" value="2"/>
</dbReference>
<dbReference type="Gene3D" id="2.130.10.10">
    <property type="entry name" value="YVTN repeat-like/Quinoprotein amine dehydrogenase"/>
    <property type="match status" value="2"/>
</dbReference>
<dbReference type="InterPro" id="IPR031777">
    <property type="entry name" value="Sortilin_C"/>
</dbReference>
<dbReference type="InterPro" id="IPR031778">
    <property type="entry name" value="Sortilin_N"/>
</dbReference>
<dbReference type="InterPro" id="IPR006581">
    <property type="entry name" value="VPS10"/>
</dbReference>
<dbReference type="InterPro" id="IPR050310">
    <property type="entry name" value="VPS10-sortilin"/>
</dbReference>
<dbReference type="InterPro" id="IPR015943">
    <property type="entry name" value="WD40/YVTN_repeat-like_dom_sf"/>
</dbReference>
<dbReference type="PANTHER" id="PTHR12106">
    <property type="entry name" value="SORTILIN RELATED"/>
    <property type="match status" value="1"/>
</dbReference>
<dbReference type="PANTHER" id="PTHR12106:SF27">
    <property type="entry name" value="SORTILIN-RELATED RECEPTOR"/>
    <property type="match status" value="1"/>
</dbReference>
<dbReference type="Pfam" id="PF15902">
    <property type="entry name" value="Sortilin-Vps10"/>
    <property type="match status" value="2"/>
</dbReference>
<dbReference type="Pfam" id="PF15901">
    <property type="entry name" value="Sortilin_C"/>
    <property type="match status" value="2"/>
</dbReference>
<dbReference type="SMART" id="SM00602">
    <property type="entry name" value="VPS10"/>
    <property type="match status" value="2"/>
</dbReference>
<dbReference type="SUPFAM" id="SSF110296">
    <property type="entry name" value="Oligoxyloglucan reducing end-specific cellobiohydrolase"/>
    <property type="match status" value="3"/>
</dbReference>
<keyword id="KW-0325">Glycoprotein</keyword>
<keyword id="KW-0333">Golgi apparatus</keyword>
<keyword id="KW-0472">Membrane</keyword>
<keyword id="KW-0653">Protein transport</keyword>
<keyword id="KW-0675">Receptor</keyword>
<keyword id="KW-1185">Reference proteome</keyword>
<keyword id="KW-0677">Repeat</keyword>
<keyword id="KW-0732">Signal</keyword>
<keyword id="KW-0812">Transmembrane</keyword>
<keyword id="KW-1133">Transmembrane helix</keyword>
<keyword id="KW-0813">Transport</keyword>
<proteinExistence type="inferred from homology"/>
<gene>
    <name type="primary">VPS10</name>
    <name type="ORF">CHGG_02843</name>
</gene>
<organism>
    <name type="scientific">Chaetomium globosum (strain ATCC 6205 / CBS 148.51 / DSM 1962 / NBRC 6347 / NRRL 1970)</name>
    <name type="common">Soil fungus</name>
    <dbReference type="NCBI Taxonomy" id="306901"/>
    <lineage>
        <taxon>Eukaryota</taxon>
        <taxon>Fungi</taxon>
        <taxon>Dikarya</taxon>
        <taxon>Ascomycota</taxon>
        <taxon>Pezizomycotina</taxon>
        <taxon>Sordariomycetes</taxon>
        <taxon>Sordariomycetidae</taxon>
        <taxon>Sordariales</taxon>
        <taxon>Chaetomiaceae</taxon>
        <taxon>Chaetomium</taxon>
    </lineage>
</organism>
<feature type="signal peptide" evidence="2">
    <location>
        <begin position="1"/>
        <end position="24"/>
    </location>
</feature>
<feature type="chain" id="PRO_0000407512" description="Vacuolar protein sorting/targeting protein 10">
    <location>
        <begin position="25"/>
        <end position="1526"/>
    </location>
</feature>
<feature type="topological domain" description="Lumenal" evidence="2">
    <location>
        <begin position="25"/>
        <end position="1385"/>
    </location>
</feature>
<feature type="transmembrane region" description="Helical" evidence="2">
    <location>
        <begin position="1386"/>
        <end position="1406"/>
    </location>
</feature>
<feature type="topological domain" description="Cytoplasmic" evidence="2">
    <location>
        <begin position="1407"/>
        <end position="1437"/>
    </location>
</feature>
<feature type="transmembrane region" description="Helical" evidence="2">
    <location>
        <begin position="1438"/>
        <end position="1458"/>
    </location>
</feature>
<feature type="topological domain" description="Lumenal" evidence="2">
    <location>
        <begin position="1459"/>
        <end position="1526"/>
    </location>
</feature>
<feature type="repeat" description="BNR 1">
    <location>
        <begin position="64"/>
        <end position="74"/>
    </location>
</feature>
<feature type="repeat" description="BNR 2">
    <location>
        <begin position="107"/>
        <end position="118"/>
    </location>
</feature>
<feature type="repeat" description="BNR 3">
    <location>
        <begin position="453"/>
        <end position="463"/>
    </location>
</feature>
<feature type="repeat" description="BNR 4">
    <location>
        <begin position="497"/>
        <end position="507"/>
    </location>
</feature>
<feature type="repeat" description="BNR 5">
    <location>
        <begin position="793"/>
        <end position="803"/>
    </location>
</feature>
<feature type="repeat" description="BNR 6">
    <location>
        <begin position="847"/>
        <end position="856"/>
    </location>
</feature>
<feature type="repeat" description="BNR 7">
    <location>
        <begin position="1134"/>
        <end position="1144"/>
    </location>
</feature>
<feature type="repeat" description="BNR 8">
    <location>
        <begin position="1180"/>
        <end position="1189"/>
    </location>
</feature>
<feature type="region of interest" description="Disordered" evidence="3">
    <location>
        <begin position="1470"/>
        <end position="1498"/>
    </location>
</feature>
<feature type="compositionally biased region" description="Gly residues" evidence="3">
    <location>
        <begin position="1484"/>
        <end position="1493"/>
    </location>
</feature>
<feature type="glycosylation site" description="N-linked (GlcNAc...) asparagine" evidence="2">
    <location>
        <position position="311"/>
    </location>
</feature>
<feature type="glycosylation site" description="N-linked (GlcNAc...) asparagine" evidence="2">
    <location>
        <position position="336"/>
    </location>
</feature>
<feature type="glycosylation site" description="N-linked (GlcNAc...) asparagine" evidence="2">
    <location>
        <position position="938"/>
    </location>
</feature>
<feature type="glycosylation site" description="N-linked (GlcNAc...) asparagine" evidence="2">
    <location>
        <position position="1003"/>
    </location>
</feature>
<name>VPS10_CHAGB</name>
<comment type="function">
    <text evidence="1">Functions as a sorting receptor in the Golgi compartment required for the intracellular sorting and delivery of soluble vacuolar proteins, like carboxypeptidase Y (CPY) and proteinase A. Executes multiple rounds of sorting by cycling between the late Golgi and a prevacuolar endosome-like compartment (By similarity).</text>
</comment>
<comment type="subcellular location">
    <subcellularLocation>
        <location evidence="1">Golgi apparatus</location>
        <location evidence="1">trans-Golgi network membrane</location>
        <topology evidence="1">Multi-pass membrane protein</topology>
    </subcellularLocation>
    <subcellularLocation>
        <location evidence="1">Prevacuolar compartment membrane</location>
        <topology evidence="1">Multi-pass membrane protein</topology>
    </subcellularLocation>
    <text evidence="1">Cycles between the Golgi apparatus and the prevacuolar compartment.</text>
</comment>
<comment type="similarity">
    <text evidence="4">Belongs to the VPS10-related sortilin family.</text>
</comment>
<reference key="1">
    <citation type="journal article" date="2015" name="Genome Announc.">
        <title>Draft genome sequence of the cellulolytic fungus Chaetomium globosum.</title>
        <authorList>
            <person name="Cuomo C.A."/>
            <person name="Untereiner W.A."/>
            <person name="Ma L.-J."/>
            <person name="Grabherr M."/>
            <person name="Birren B.W."/>
        </authorList>
    </citation>
    <scope>NUCLEOTIDE SEQUENCE [LARGE SCALE GENOMIC DNA]</scope>
    <source>
        <strain>ATCC 6205 / CBS 148.51 / DSM 1962 / NBRC 6347 / NRRL 1970</strain>
    </source>
</reference>
<sequence>MRVRGALQAAAVLATALWATPLAAKKNDRPTFHTKAFENAPRSLNYFPDSDTVLFQDQSANNVYLSSDHGVKWERVDAVPEGKAWMLSMHGFDSNRAYILTEGTTHFRTSDRGKTWEKFKSGIQLSLFRPDILRFHANDPDRILFNGMICEGLDCQEVAQYTTDGFKTPAKELRRNTDGCWWAKSSDLFTTGAEDLDNNRVLCVVRDSFSPFKQDQRLLISDNFFRTSDDSSDIQEFEPDLDMNKPVQGVVSIAVVKKYLLVATTSMNTDEMALFITGDTKKWHRAVFPANHEGHDHRVLQEAYTALESTNYSIQIDVMTTRPSNPMGVMFTSNSNGTYFTENVPHTNRNERGHVDFEKVTGIQGVFLVNKVDNWEDVAKKASTKKKVVSEITFDDGRTFEPVTAGDKRIHLHSVTELSNVGPVFSSPAPGLLMAIGNRGDYLKNYWDDGNLYVSDDAGMTWNKALDGPHKYEFGDQGSILVAVRDSKEVDVSEISYSLDHGLTWTKQALPDDLKIRPYILTTTQESASLKFLLIGMVKESPSWQVISIDFDGLHEATCKEDDMEEWFARVDKDGKPTCLMGHTQSFPRRKKKAECFLKQEFKHPVSKTENCECTDKDYECDFNFAREDGKCVAKGPIIPPEGVCRDAKPDDTFKGTSGYRKILGNTCKETKEMDDKYKDVERKCSEIGGGGGGKPSTPATDKIEQIENVFDKDWDRWEKHYLERGESSSSEGETIIMRGRTKSKLGPIYVTENHGKEWHVPKYLKEEEIVHIVPHQYFKDMVFFITTGKKIIYTTDRGRTYHSFKAPNEPSDDVMPLSFHPDKKNWLIWNGKKCESSDDCFGVVSYSKDGGDHWQTGGSIYTRRCEFTGSRAYKYPGRKEEQILCLKHEKESKAKDNPMVLISTNDWFDNEEIRQKNVREFATMAEFVVVATENSANKTLQASASLDGATFADALFPHGFVVPHQHIYTVLDSSTHAVNLFVATSMDGNLCNYGSILKSNSNGTSYVVSVGNVNCDEDSYVDFDKIAGLEGVALVNVVANPDAESSAPKRLQTKITHNDGAQWAYLSTPPNDDIGKFPCQSSGDEKCALHLHGYTERRLRGNTWYSSESAVGIMVAWGNVGDSLGPRKDSDTFMTTDAGLTWKRVKQGQWTWAIGDQGGIIVLIQTTSVSRKKTKSLVYSLDQGKTWKEHEFASDEVEVWDVTTLRSGSSQNFLLWGKGSKGPFTLKLDFSGFSEDVCKVDDDPDKSDYYLWSPKHPMQPDGCLFGHVSQYLRKKSDRKCYNDFKLQPLYGKEDCKCTREDFECDYNYQLDPFGQCSLVPGLEPADPSAWCKQHPDEIEYHEPTGYRRIPLTTCVGGRQPDKESPVHACAGHEEDFERKHAVSGLALFFAITVPFALAGAAGWYVWRNWNGKFGQIRLGDQGAAVFEADRPWVRYPVIVLSAVAAVVVALPVVVGAVWRSVSGLLGGRGGAGGGDGRGRWSRLGGGGGGGGRRFTTRDSFARGGDYAVVDDDEGELLGEDSDEEV</sequence>
<protein>
    <recommendedName>
        <fullName>Vacuolar protein sorting/targeting protein 10</fullName>
    </recommendedName>
    <alternativeName>
        <fullName>Carboxypeptidase Y receptor</fullName>
        <shortName>CPY receptor</shortName>
    </alternativeName>
    <alternativeName>
        <fullName>Sortilin VPS10</fullName>
    </alternativeName>
    <alternativeName>
        <fullName>Vacuolar carboxypeptidase sorting receptor VPS10</fullName>
    </alternativeName>
</protein>
<evidence type="ECO:0000250" key="1"/>
<evidence type="ECO:0000255" key="2"/>
<evidence type="ECO:0000256" key="3">
    <source>
        <dbReference type="SAM" id="MobiDB-lite"/>
    </source>
</evidence>
<evidence type="ECO:0000305" key="4"/>
<accession>Q2HAB1</accession>